<proteinExistence type="evidence at transcript level"/>
<dbReference type="EC" id="5.1.3.2"/>
<dbReference type="EMBL" id="AP005879">
    <property type="protein sequence ID" value="BAD23675.1"/>
    <property type="molecule type" value="Genomic_DNA"/>
</dbReference>
<dbReference type="EMBL" id="AP008215">
    <property type="protein sequence ID" value="BAF24783.1"/>
    <property type="molecule type" value="Genomic_DNA"/>
</dbReference>
<dbReference type="EMBL" id="AP014965">
    <property type="protein sequence ID" value="BAT07457.1"/>
    <property type="molecule type" value="Genomic_DNA"/>
</dbReference>
<dbReference type="EMBL" id="CM000146">
    <property type="protein sequence ID" value="EEE69457.1"/>
    <property type="molecule type" value="Genomic_DNA"/>
</dbReference>
<dbReference type="EMBL" id="AK121426">
    <property type="protein sequence ID" value="BAH00483.1"/>
    <property type="molecule type" value="mRNA"/>
</dbReference>
<dbReference type="RefSeq" id="XP_015611994.1">
    <property type="nucleotide sequence ID" value="XM_015756508.1"/>
</dbReference>
<dbReference type="SMR" id="Q6K2E1"/>
<dbReference type="FunCoup" id="Q6K2E1">
    <property type="interactions" value="373"/>
</dbReference>
<dbReference type="STRING" id="39947.Q6K2E1"/>
<dbReference type="PaxDb" id="39947-Q6K2E1"/>
<dbReference type="EnsemblPlants" id="Os09t0323000-01">
    <property type="protein sequence ID" value="Os09t0323000-01"/>
    <property type="gene ID" value="Os09g0323000"/>
</dbReference>
<dbReference type="Gramene" id="Os09t0323000-01">
    <property type="protein sequence ID" value="Os09t0323000-01"/>
    <property type="gene ID" value="Os09g0323000"/>
</dbReference>
<dbReference type="KEGG" id="dosa:Os09g0323000"/>
<dbReference type="eggNOG" id="KOG1371">
    <property type="taxonomic scope" value="Eukaryota"/>
</dbReference>
<dbReference type="HOGENOM" id="CLU_007383_1_10_1"/>
<dbReference type="InParanoid" id="Q6K2E1"/>
<dbReference type="OMA" id="NWYGRTK"/>
<dbReference type="OrthoDB" id="9402762at2759"/>
<dbReference type="PlantReactome" id="R-OSA-1119452">
    <property type="pathway name" value="Galactose degradation II"/>
</dbReference>
<dbReference type="UniPathway" id="UPA00214"/>
<dbReference type="Proteomes" id="UP000000763">
    <property type="component" value="Chromosome 9"/>
</dbReference>
<dbReference type="Proteomes" id="UP000007752">
    <property type="component" value="Chromosome 9"/>
</dbReference>
<dbReference type="Proteomes" id="UP000059680">
    <property type="component" value="Chromosome 9"/>
</dbReference>
<dbReference type="ExpressionAtlas" id="Q6K2E1">
    <property type="expression patterns" value="baseline and differential"/>
</dbReference>
<dbReference type="GO" id="GO:0005829">
    <property type="term" value="C:cytosol"/>
    <property type="evidence" value="ECO:0000318"/>
    <property type="project" value="GO_Central"/>
</dbReference>
<dbReference type="GO" id="GO:0003978">
    <property type="term" value="F:UDP-glucose 4-epimerase activity"/>
    <property type="evidence" value="ECO:0000318"/>
    <property type="project" value="GO_Central"/>
</dbReference>
<dbReference type="GO" id="GO:0006012">
    <property type="term" value="P:galactose metabolic process"/>
    <property type="evidence" value="ECO:0007669"/>
    <property type="project" value="UniProtKB-UniPathway"/>
</dbReference>
<dbReference type="GO" id="GO:0005996">
    <property type="term" value="P:monosaccharide metabolic process"/>
    <property type="evidence" value="ECO:0000318"/>
    <property type="project" value="GO_Central"/>
</dbReference>
<dbReference type="CDD" id="cd05247">
    <property type="entry name" value="UDP_G4E_1_SDR_e"/>
    <property type="match status" value="1"/>
</dbReference>
<dbReference type="FunFam" id="3.90.25.10:FF:000078">
    <property type="entry name" value="Delta-1-pyrroline-5-carboxylate synthase B"/>
    <property type="match status" value="1"/>
</dbReference>
<dbReference type="FunFam" id="3.40.50.720:FF:000040">
    <property type="entry name" value="UDP-glucose 4-epimerase"/>
    <property type="match status" value="1"/>
</dbReference>
<dbReference type="FunFam" id="3.90.25.10:FF:000060">
    <property type="entry name" value="UDP-glucose 4-epimerase 4"/>
    <property type="match status" value="1"/>
</dbReference>
<dbReference type="Gene3D" id="3.40.50.720">
    <property type="entry name" value="NAD(P)-binding Rossmann-like Domain"/>
    <property type="match status" value="1"/>
</dbReference>
<dbReference type="Gene3D" id="3.90.25.10">
    <property type="entry name" value="UDP-galactose 4-epimerase, domain 1"/>
    <property type="match status" value="1"/>
</dbReference>
<dbReference type="InterPro" id="IPR016040">
    <property type="entry name" value="NAD(P)-bd_dom"/>
</dbReference>
<dbReference type="InterPro" id="IPR036291">
    <property type="entry name" value="NAD(P)-bd_dom_sf"/>
</dbReference>
<dbReference type="InterPro" id="IPR005886">
    <property type="entry name" value="UDP_G4E"/>
</dbReference>
<dbReference type="NCBIfam" id="TIGR01179">
    <property type="entry name" value="galE"/>
    <property type="match status" value="1"/>
</dbReference>
<dbReference type="NCBIfam" id="NF007956">
    <property type="entry name" value="PRK10675.1"/>
    <property type="match status" value="1"/>
</dbReference>
<dbReference type="PANTHER" id="PTHR43725">
    <property type="entry name" value="UDP-GLUCOSE 4-EPIMERASE"/>
    <property type="match status" value="1"/>
</dbReference>
<dbReference type="PANTHER" id="PTHR43725:SF1">
    <property type="entry name" value="UDP-GLUCOSE 4-EPIMERASE 4"/>
    <property type="match status" value="1"/>
</dbReference>
<dbReference type="Pfam" id="PF16363">
    <property type="entry name" value="GDP_Man_Dehyd"/>
    <property type="match status" value="1"/>
</dbReference>
<dbReference type="SUPFAM" id="SSF51735">
    <property type="entry name" value="NAD(P)-binding Rossmann-fold domains"/>
    <property type="match status" value="1"/>
</dbReference>
<comment type="function">
    <text evidence="1">Catalyzes the interconversion between UDP-glucose and UDP-galactose.</text>
</comment>
<comment type="catalytic activity">
    <reaction>
        <text>UDP-alpha-D-glucose = UDP-alpha-D-galactose</text>
        <dbReference type="Rhea" id="RHEA:22168"/>
        <dbReference type="ChEBI" id="CHEBI:58885"/>
        <dbReference type="ChEBI" id="CHEBI:66914"/>
        <dbReference type="EC" id="5.1.3.2"/>
    </reaction>
</comment>
<comment type="cofactor">
    <cofactor evidence="1">
        <name>NAD(+)</name>
        <dbReference type="ChEBI" id="CHEBI:57540"/>
    </cofactor>
</comment>
<comment type="pathway">
    <text>Carbohydrate metabolism; galactose metabolism.</text>
</comment>
<comment type="similarity">
    <text evidence="2">Belongs to the NAD(P)-dependent epimerase/dehydratase family.</text>
</comment>
<keyword id="KW-0119">Carbohydrate metabolism</keyword>
<keyword id="KW-0299">Galactose metabolism</keyword>
<keyword id="KW-0413">Isomerase</keyword>
<keyword id="KW-0520">NAD</keyword>
<keyword id="KW-1185">Reference proteome</keyword>
<accession>Q6K2E1</accession>
<accession>A0A0P0XLE5</accession>
<evidence type="ECO:0000250" key="1"/>
<evidence type="ECO:0000305" key="2"/>
<organism>
    <name type="scientific">Oryza sativa subsp. japonica</name>
    <name type="common">Rice</name>
    <dbReference type="NCBI Taxonomy" id="39947"/>
    <lineage>
        <taxon>Eukaryota</taxon>
        <taxon>Viridiplantae</taxon>
        <taxon>Streptophyta</taxon>
        <taxon>Embryophyta</taxon>
        <taxon>Tracheophyta</taxon>
        <taxon>Spermatophyta</taxon>
        <taxon>Magnoliopsida</taxon>
        <taxon>Liliopsida</taxon>
        <taxon>Poales</taxon>
        <taxon>Poaceae</taxon>
        <taxon>BOP clade</taxon>
        <taxon>Oryzoideae</taxon>
        <taxon>Oryzeae</taxon>
        <taxon>Oryzinae</taxon>
        <taxon>Oryza</taxon>
        <taxon>Oryza sativa</taxon>
    </lineage>
</organism>
<reference key="1">
    <citation type="journal article" date="2005" name="Nature">
        <title>The map-based sequence of the rice genome.</title>
        <authorList>
            <consortium name="International rice genome sequencing project (IRGSP)"/>
        </authorList>
    </citation>
    <scope>NUCLEOTIDE SEQUENCE [LARGE SCALE GENOMIC DNA]</scope>
    <source>
        <strain>cv. Nipponbare</strain>
    </source>
</reference>
<reference key="2">
    <citation type="journal article" date="2008" name="Nucleic Acids Res.">
        <title>The rice annotation project database (RAP-DB): 2008 update.</title>
        <authorList>
            <consortium name="The rice annotation project (RAP)"/>
        </authorList>
    </citation>
    <scope>GENOME REANNOTATION</scope>
    <source>
        <strain>cv. Nipponbare</strain>
    </source>
</reference>
<reference key="3">
    <citation type="journal article" date="2013" name="Rice">
        <title>Improvement of the Oryza sativa Nipponbare reference genome using next generation sequence and optical map data.</title>
        <authorList>
            <person name="Kawahara Y."/>
            <person name="de la Bastide M."/>
            <person name="Hamilton J.P."/>
            <person name="Kanamori H."/>
            <person name="McCombie W.R."/>
            <person name="Ouyang S."/>
            <person name="Schwartz D.C."/>
            <person name="Tanaka T."/>
            <person name="Wu J."/>
            <person name="Zhou S."/>
            <person name="Childs K.L."/>
            <person name="Davidson R.M."/>
            <person name="Lin H."/>
            <person name="Quesada-Ocampo L."/>
            <person name="Vaillancourt B."/>
            <person name="Sakai H."/>
            <person name="Lee S.S."/>
            <person name="Kim J."/>
            <person name="Numa H."/>
            <person name="Itoh T."/>
            <person name="Buell C.R."/>
            <person name="Matsumoto T."/>
        </authorList>
    </citation>
    <scope>GENOME REANNOTATION</scope>
    <source>
        <strain>cv. Nipponbare</strain>
    </source>
</reference>
<reference key="4">
    <citation type="journal article" date="2005" name="PLoS Biol.">
        <title>The genomes of Oryza sativa: a history of duplications.</title>
        <authorList>
            <person name="Yu J."/>
            <person name="Wang J."/>
            <person name="Lin W."/>
            <person name="Li S."/>
            <person name="Li H."/>
            <person name="Zhou J."/>
            <person name="Ni P."/>
            <person name="Dong W."/>
            <person name="Hu S."/>
            <person name="Zeng C."/>
            <person name="Zhang J."/>
            <person name="Zhang Y."/>
            <person name="Li R."/>
            <person name="Xu Z."/>
            <person name="Li S."/>
            <person name="Li X."/>
            <person name="Zheng H."/>
            <person name="Cong L."/>
            <person name="Lin L."/>
            <person name="Yin J."/>
            <person name="Geng J."/>
            <person name="Li G."/>
            <person name="Shi J."/>
            <person name="Liu J."/>
            <person name="Lv H."/>
            <person name="Li J."/>
            <person name="Wang J."/>
            <person name="Deng Y."/>
            <person name="Ran L."/>
            <person name="Shi X."/>
            <person name="Wang X."/>
            <person name="Wu Q."/>
            <person name="Li C."/>
            <person name="Ren X."/>
            <person name="Wang J."/>
            <person name="Wang X."/>
            <person name="Li D."/>
            <person name="Liu D."/>
            <person name="Zhang X."/>
            <person name="Ji Z."/>
            <person name="Zhao W."/>
            <person name="Sun Y."/>
            <person name="Zhang Z."/>
            <person name="Bao J."/>
            <person name="Han Y."/>
            <person name="Dong L."/>
            <person name="Ji J."/>
            <person name="Chen P."/>
            <person name="Wu S."/>
            <person name="Liu J."/>
            <person name="Xiao Y."/>
            <person name="Bu D."/>
            <person name="Tan J."/>
            <person name="Yang L."/>
            <person name="Ye C."/>
            <person name="Zhang J."/>
            <person name="Xu J."/>
            <person name="Zhou Y."/>
            <person name="Yu Y."/>
            <person name="Zhang B."/>
            <person name="Zhuang S."/>
            <person name="Wei H."/>
            <person name="Liu B."/>
            <person name="Lei M."/>
            <person name="Yu H."/>
            <person name="Li Y."/>
            <person name="Xu H."/>
            <person name="Wei S."/>
            <person name="He X."/>
            <person name="Fang L."/>
            <person name="Zhang Z."/>
            <person name="Zhang Y."/>
            <person name="Huang X."/>
            <person name="Su Z."/>
            <person name="Tong W."/>
            <person name="Li J."/>
            <person name="Tong Z."/>
            <person name="Li S."/>
            <person name="Ye J."/>
            <person name="Wang L."/>
            <person name="Fang L."/>
            <person name="Lei T."/>
            <person name="Chen C.-S."/>
            <person name="Chen H.-C."/>
            <person name="Xu Z."/>
            <person name="Li H."/>
            <person name="Huang H."/>
            <person name="Zhang F."/>
            <person name="Xu H."/>
            <person name="Li N."/>
            <person name="Zhao C."/>
            <person name="Li S."/>
            <person name="Dong L."/>
            <person name="Huang Y."/>
            <person name="Li L."/>
            <person name="Xi Y."/>
            <person name="Qi Q."/>
            <person name="Li W."/>
            <person name="Zhang B."/>
            <person name="Hu W."/>
            <person name="Zhang Y."/>
            <person name="Tian X."/>
            <person name="Jiao Y."/>
            <person name="Liang X."/>
            <person name="Jin J."/>
            <person name="Gao L."/>
            <person name="Zheng W."/>
            <person name="Hao B."/>
            <person name="Liu S.-M."/>
            <person name="Wang W."/>
            <person name="Yuan L."/>
            <person name="Cao M."/>
            <person name="McDermott J."/>
            <person name="Samudrala R."/>
            <person name="Wang J."/>
            <person name="Wong G.K.-S."/>
            <person name="Yang H."/>
        </authorList>
    </citation>
    <scope>NUCLEOTIDE SEQUENCE [LARGE SCALE GENOMIC DNA]</scope>
    <source>
        <strain>cv. Nipponbare</strain>
    </source>
</reference>
<reference key="5">
    <citation type="journal article" date="2003" name="Science">
        <title>Collection, mapping, and annotation of over 28,000 cDNA clones from japonica rice.</title>
        <authorList>
            <consortium name="The rice full-length cDNA consortium"/>
        </authorList>
    </citation>
    <scope>NUCLEOTIDE SEQUENCE [LARGE SCALE MRNA]</scope>
    <source>
        <strain>cv. Nipponbare</strain>
    </source>
</reference>
<reference key="6">
    <citation type="journal article" date="2006" name="Biochem. J.">
        <title>Gene expression patterns and catalytic properties of UDP-D-glucose 4-epimerases from barley (Hordeum vulgare L.).</title>
        <authorList>
            <person name="Zhang Q."/>
            <person name="Hrmova M."/>
            <person name="Shirley N.J."/>
            <person name="Lahnstein J."/>
            <person name="Fincher G.B."/>
        </authorList>
    </citation>
    <scope>GENE FAMILY</scope>
</reference>
<sequence length="369" mass="39647">MAGGEVVAVAAAAAGTSRTVLVTGGAGYIGSHTVLQLLAAGFRVVVADSLGNSSELAVRRVAALAGDKARNLSLHKVDIRDKGGLEKVFSSTRFDAVVHFAGLKAVGESVQKPLLYYDHNVAGTIILLEVMAAHGCKKLVFSSSAAVYGSPKNSPCTEEFPLTPHNPYGRTKLIAEEICRDIYHSDSEWSIILLRYFNPVGAHPSGYLGEDPCGIPNNLMPFVQQVAVGRRPSLTIFGNDYATKDGTGVRDYIHVVDLAEGHIAALRKLFESSIGCQAYNLGTGKGTSVLEIVNAFEKVSGKKIPLVIGPRRPGDAEILFSSAAKAEREFKWKAKYGIEEMCRDQWNWASKNPFGYASPDSTKQNGHSH</sequence>
<gene>
    <name type="primary">UGE-4</name>
    <name type="ordered locus">Os09g0323000</name>
    <name type="ordered locus">LOC_Os09g15420</name>
    <name type="ORF">OsJ_28859</name>
    <name type="ORF">OSJNBb0024J13.13-1</name>
</gene>
<name>UGE4_ORYSJ</name>
<feature type="chain" id="PRO_0000422191" description="UDP-glucose 4-epimerase 4">
    <location>
        <begin position="1"/>
        <end position="369"/>
    </location>
</feature>
<feature type="active site" description="Proton acceptor" evidence="1">
    <location>
        <position position="168"/>
    </location>
</feature>
<feature type="binding site" evidence="1">
    <location>
        <begin position="19"/>
        <end position="50"/>
    </location>
    <ligand>
        <name>NAD(+)</name>
        <dbReference type="ChEBI" id="CHEBI:57540"/>
    </ligand>
</feature>
<feature type="binding site" evidence="1">
    <location>
        <position position="144"/>
    </location>
    <ligand>
        <name>substrate</name>
    </ligand>
</feature>
<protein>
    <recommendedName>
        <fullName>UDP-glucose 4-epimerase 4</fullName>
        <shortName>OsUGE-4</shortName>
        <ecNumber>5.1.3.2</ecNumber>
    </recommendedName>
    <alternativeName>
        <fullName>UDP-galactose 4-epimerase 4</fullName>
    </alternativeName>
</protein>